<accession>Q8DVN4</accession>
<proteinExistence type="inferred from homology"/>
<organism>
    <name type="scientific">Streptococcus mutans serotype c (strain ATCC 700610 / UA159)</name>
    <dbReference type="NCBI Taxonomy" id="210007"/>
    <lineage>
        <taxon>Bacteria</taxon>
        <taxon>Bacillati</taxon>
        <taxon>Bacillota</taxon>
        <taxon>Bacilli</taxon>
        <taxon>Lactobacillales</taxon>
        <taxon>Streptococcaceae</taxon>
        <taxon>Streptococcus</taxon>
    </lineage>
</organism>
<feature type="chain" id="PRO_0000059633" description="UPF0310 protein SMU_442">
    <location>
        <begin position="1"/>
        <end position="136"/>
    </location>
</feature>
<name>Y442_STRMU</name>
<evidence type="ECO:0000255" key="1">
    <source>
        <dbReference type="HAMAP-Rule" id="MF_00771"/>
    </source>
</evidence>
<dbReference type="EMBL" id="AE014133">
    <property type="protein sequence ID" value="AAN58193.1"/>
    <property type="molecule type" value="Genomic_DNA"/>
</dbReference>
<dbReference type="RefSeq" id="NP_720887.1">
    <property type="nucleotide sequence ID" value="NC_004350.2"/>
</dbReference>
<dbReference type="RefSeq" id="WP_002262080.1">
    <property type="nucleotide sequence ID" value="NC_004350.2"/>
</dbReference>
<dbReference type="SMR" id="Q8DVN4"/>
<dbReference type="STRING" id="210007.SMU_442"/>
<dbReference type="KEGG" id="smu:SMU_442"/>
<dbReference type="PATRIC" id="fig|210007.7.peg.390"/>
<dbReference type="eggNOG" id="COG1673">
    <property type="taxonomic scope" value="Bacteria"/>
</dbReference>
<dbReference type="HOGENOM" id="CLU_117727_0_0_9"/>
<dbReference type="OrthoDB" id="9793567at2"/>
<dbReference type="Proteomes" id="UP000002512">
    <property type="component" value="Chromosome"/>
</dbReference>
<dbReference type="CDD" id="cd21132">
    <property type="entry name" value="EVE-like"/>
    <property type="match status" value="1"/>
</dbReference>
<dbReference type="Gene3D" id="3.10.590.10">
    <property type="entry name" value="ph1033 like domains"/>
    <property type="match status" value="1"/>
</dbReference>
<dbReference type="HAMAP" id="MF_00771">
    <property type="entry name" value="UPF0310"/>
    <property type="match status" value="1"/>
</dbReference>
<dbReference type="InterPro" id="IPR002740">
    <property type="entry name" value="EVE_domain"/>
</dbReference>
<dbReference type="InterPro" id="IPR015947">
    <property type="entry name" value="PUA-like_sf"/>
</dbReference>
<dbReference type="InterPro" id="IPR022996">
    <property type="entry name" value="UPF0310"/>
</dbReference>
<dbReference type="NCBIfam" id="NF002616">
    <property type="entry name" value="PRK02268.1-2"/>
    <property type="match status" value="1"/>
</dbReference>
<dbReference type="NCBIfam" id="NF002617">
    <property type="entry name" value="PRK02268.1-3"/>
    <property type="match status" value="1"/>
</dbReference>
<dbReference type="Pfam" id="PF01878">
    <property type="entry name" value="EVE"/>
    <property type="match status" value="1"/>
</dbReference>
<dbReference type="SUPFAM" id="SSF88697">
    <property type="entry name" value="PUA domain-like"/>
    <property type="match status" value="1"/>
</dbReference>
<reference key="1">
    <citation type="journal article" date="2002" name="Proc. Natl. Acad. Sci. U.S.A.">
        <title>Genome sequence of Streptococcus mutans UA159, a cariogenic dental pathogen.</title>
        <authorList>
            <person name="Ajdic D.J."/>
            <person name="McShan W.M."/>
            <person name="McLaughlin R.E."/>
            <person name="Savic G."/>
            <person name="Chang J."/>
            <person name="Carson M.B."/>
            <person name="Primeaux C."/>
            <person name="Tian R."/>
            <person name="Kenton S."/>
            <person name="Jia H.G."/>
            <person name="Lin S.P."/>
            <person name="Qian Y."/>
            <person name="Li S."/>
            <person name="Zhu H."/>
            <person name="Najar F.Z."/>
            <person name="Lai H."/>
            <person name="White J."/>
            <person name="Roe B.A."/>
            <person name="Ferretti J.J."/>
        </authorList>
    </citation>
    <scope>NUCLEOTIDE SEQUENCE [LARGE SCALE GENOMIC DNA]</scope>
    <source>
        <strain>ATCC 700610 / UA159</strain>
    </source>
</reference>
<sequence>MVKFWVGVVSENHVKRGVDGGFCQVCHGKGGPLRRMKKGDYLLYYSPKIALDSNQKLQAFTAAGKMKDDRVYQFEMAPDFIPFRRDVEYYRSVQPCPIETARQHPDWKTYASQLRYGHFEVSRDFFMYIFNAMKLE</sequence>
<keyword id="KW-1185">Reference proteome</keyword>
<gene>
    <name type="ordered locus">SMU_442</name>
</gene>
<comment type="similarity">
    <text evidence="1">Belongs to the UPF0310 family.</text>
</comment>
<protein>
    <recommendedName>
        <fullName evidence="1">UPF0310 protein SMU_442</fullName>
    </recommendedName>
</protein>